<keyword id="KW-0150">Chloroplast</keyword>
<keyword id="KW-0456">Lyase</keyword>
<keyword id="KW-0460">Magnesium</keyword>
<keyword id="KW-0479">Metal-binding</keyword>
<keyword id="KW-0934">Plastid</keyword>
<keyword id="KW-0809">Transit peptide</keyword>
<evidence type="ECO:0000250" key="1">
    <source>
        <dbReference type="UniProtKB" id="O81086"/>
    </source>
</evidence>
<evidence type="ECO:0000255" key="2"/>
<evidence type="ECO:0000269" key="3">
    <source>
    </source>
</evidence>
<evidence type="ECO:0000303" key="4">
    <source>
    </source>
</evidence>
<evidence type="ECO:0000305" key="5"/>
<evidence type="ECO:0000305" key="6">
    <source>
    </source>
</evidence>
<accession>A0A1L6Z3A0</accession>
<organism>
    <name type="scientific">Pseudolarix amabilis</name>
    <name type="common">Golden larch</name>
    <name type="synonym">Pseudolarix kaempferi</name>
    <dbReference type="NCBI Taxonomy" id="3355"/>
    <lineage>
        <taxon>Eukaryota</taxon>
        <taxon>Viridiplantae</taxon>
        <taxon>Streptophyta</taxon>
        <taxon>Embryophyta</taxon>
        <taxon>Tracheophyta</taxon>
        <taxon>Spermatophyta</taxon>
        <taxon>Pinopsida</taxon>
        <taxon>Pinidae</taxon>
        <taxon>Conifers I</taxon>
        <taxon>Pinales</taxon>
        <taxon>Pinaceae</taxon>
        <taxon>Pseudolarix</taxon>
    </lineage>
</organism>
<sequence>MSRFTSATHGLNLSIKMPISVSQVPSIRSNTSKYELQKLRSTGRSVLQTRRQLAIINMTKRSEADDNDGVERRKGVFHPNLWDDGFIQSLSTVYHEQASYRERAERLIGEVKAVFDSISMGDGDQFISPSAYDTAWVARVPAIDGSSRPQFPQAIDWILLNQQQDGSWGSQSHLSLTHRLTDTLACVIALASWKIESVQIDEGLDFITRGVEKLQSESVPAEFEIIFAELLNQAKSLQLSLPYEHSCLQSLWRKQEPILANGLMDSVAKRSLSSLEEMQDHRMNTDSDGTMHVESFLSSPAVAARVLMRTGNPICLAYLNNVLNKFGDYVPGMYPVDLFQRLWMVDNVERLGIDRHFKKEIQVTLDYVYSYWNGKGIGCGRDSLSPDLNSTSLGFRTLRLHGYNVSADVLEHFKDRDGKFVCSSNPTVGEIRSVLNLYRASLLAFPGEKVMEEAETFARRYLEEIVQKIPPSKFSREIEYVLEFGWQSTVPRWEARSYIDFHGLDTYSPWTIYEMASEKFLELAKLEFNIFNSLQHTELQYLSRWWNDSGMSQMRFTRHRNVEYYTMASCIAMEPSQSAFRIGFTKLCGIATCIDDIYDTYGTIDELKLFREAVKRWDPSAIESLPEYMKSVYMVLYELVNEMAQDTERTQGRDTLDYARNAWEAIIDAHLVEAEWIASGHIPTFEEYLENSKVTSGLHIAILPILTLDVPLPDQLPLQEIDTLSRFHHLASTIGRLSGDMNAYKIDLAHGEESSCISCYMKDNPGTTEGDAHNYANVTISYLMKELNLELMGQHNRVSFLRTSKKPAFDIYRASNYMYKYRDGYTIADKETKNLVMRTLVQAVSL</sequence>
<gene>
    <name evidence="4" type="primary">TPS8</name>
</gene>
<reference key="1">
    <citation type="journal article" date="2017" name="Proc. Natl. Acad. Sci. U.S.A.">
        <title>Biosynthesis of the microtubule-destabilizing diterpene pseudolaric acid B from golden larch involves an unusual diterpene synthase.</title>
        <authorList>
            <person name="Mafu S."/>
            <person name="Karunanithi P.S."/>
            <person name="Palazzo T.A."/>
            <person name="Harrod B.L."/>
            <person name="Rodriguez S.M."/>
            <person name="Mollhoff I.N."/>
            <person name="O'Brien T.E."/>
            <person name="Tong S."/>
            <person name="Fiehn O."/>
            <person name="Tantillo D.J."/>
            <person name="Bohlmann J."/>
            <person name="Zerbe P."/>
        </authorList>
    </citation>
    <scope>NUCLEOTIDE SEQUENCE [MRNA]</scope>
    <scope>FUNCTION</scope>
    <scope>CATALYTIC ACTIVITY</scope>
    <scope>COFACTOR</scope>
    <scope>TISSUE SPECIFICITY</scope>
    <scope>MUTAGENESIS OF ARG-558; TYR-564; PHE-584; ALA-591; HIS-670; SER-696; GLY-697; ALA-701; GLY-735 AND ALA-743</scope>
</reference>
<comment type="function">
    <text evidence="3 6">Converts geranylgeranyl diphosphate to an new 5,7-fused bicyclic diterpene, named pseudolaratriene (PubMed:28096378). Catalyzes the first committed step in pseudolaric acid B (PAB) biosynthesis (PubMed:28096378). PAB exhibits antiproliferative activity by inhibiting microtubule polymerization, and has demonstrated antitumor properties against several cancer types (Probable).</text>
</comment>
<comment type="catalytic activity">
    <reaction evidence="3">
        <text>(2E,6E,10E)-geranylgeranyl diphosphate = pseudolaratriene + diphosphate</text>
        <dbReference type="Rhea" id="RHEA:54116"/>
        <dbReference type="ChEBI" id="CHEBI:33019"/>
        <dbReference type="ChEBI" id="CHEBI:58756"/>
        <dbReference type="ChEBI" id="CHEBI:138050"/>
        <dbReference type="EC" id="4.2.3.180"/>
    </reaction>
    <physiologicalReaction direction="left-to-right" evidence="3">
        <dbReference type="Rhea" id="RHEA:54117"/>
    </physiologicalReaction>
</comment>
<comment type="cofactor">
    <cofactor evidence="6">
        <name>Mg(2+)</name>
        <dbReference type="ChEBI" id="CHEBI:18420"/>
    </cofactor>
</comment>
<comment type="pathway">
    <text evidence="5">Terpene metabolism.</text>
</comment>
<comment type="subcellular location">
    <subcellularLocation>
        <location evidence="2">Plastid</location>
        <location evidence="2">Chloroplast</location>
    </subcellularLocation>
</comment>
<comment type="tissue specificity">
    <text evidence="3">Expressed in young and mature roots (PubMed:28096378). Expressed at low levels in barks (PubMed:28096378).</text>
</comment>
<comment type="similarity">
    <text evidence="5">Belongs to the terpene synthase family.</text>
</comment>
<feature type="transit peptide" description="Chloroplast" evidence="2">
    <location>
        <begin position="1"/>
        <end position="58"/>
    </location>
</feature>
<feature type="chain" id="PRO_0000450341" description="Pseudolaratriene synthase, chloroplastic">
    <location>
        <begin position="59"/>
        <end position="846"/>
    </location>
</feature>
<feature type="short sequence motif" description="DDXXD motif" evidence="5">
    <location>
        <begin position="595"/>
        <end position="599"/>
    </location>
</feature>
<feature type="binding site" evidence="1">
    <location>
        <position position="595"/>
    </location>
    <ligand>
        <name>Mg(2+)</name>
        <dbReference type="ChEBI" id="CHEBI:18420"/>
        <label>1</label>
    </ligand>
</feature>
<feature type="binding site" evidence="1">
    <location>
        <position position="595"/>
    </location>
    <ligand>
        <name>Mg(2+)</name>
        <dbReference type="ChEBI" id="CHEBI:18420"/>
        <label>2</label>
    </ligand>
</feature>
<feature type="binding site" evidence="1">
    <location>
        <position position="599"/>
    </location>
    <ligand>
        <name>Mg(2+)</name>
        <dbReference type="ChEBI" id="CHEBI:18420"/>
        <label>1</label>
    </ligand>
</feature>
<feature type="binding site" evidence="1">
    <location>
        <position position="599"/>
    </location>
    <ligand>
        <name>Mg(2+)</name>
        <dbReference type="ChEBI" id="CHEBI:18420"/>
        <label>2</label>
    </ligand>
</feature>
<feature type="binding site" evidence="1">
    <location>
        <position position="747"/>
    </location>
    <ligand>
        <name>Mg(2+)</name>
        <dbReference type="ChEBI" id="CHEBI:18420"/>
        <label>3</label>
    </ligand>
</feature>
<feature type="mutagenesis site" description="Abolishes catalytic activity." evidence="3">
    <original>R</original>
    <variation>A</variation>
    <location>
        <position position="558"/>
    </location>
</feature>
<feature type="mutagenesis site" description="No effect on catalytic activity." evidence="3">
    <original>Y</original>
    <variation>F</variation>
    <location>
        <position position="564"/>
    </location>
</feature>
<feature type="mutagenesis site" description="Slightly reduces catalytic activity." evidence="3">
    <original>Y</original>
    <variation>H</variation>
    <location>
        <position position="564"/>
    </location>
</feature>
<feature type="mutagenesis site" description="Abolishes catalytic activity." evidence="3">
    <original>Y</original>
    <variation>I</variation>
    <variation>T</variation>
    <variation>V</variation>
    <location>
        <position position="564"/>
    </location>
</feature>
<feature type="mutagenesis site" description="Almost abolishes catalytic activity." evidence="3">
    <original>Y</original>
    <variation>W</variation>
    <location>
        <position position="564"/>
    </location>
</feature>
<feature type="mutagenesis site" description="Slightly reduces catalytic activity.">
    <original>F</original>
    <variation>Y</variation>
    <location>
        <position position="584"/>
    </location>
</feature>
<feature type="mutagenesis site" description="Abolishes catalytic activity." evidence="3">
    <original>A</original>
    <variation>Q</variation>
    <location>
        <position position="591"/>
    </location>
</feature>
<feature type="mutagenesis site" description="Slightly reduces catalytic activity." evidence="3">
    <original>H</original>
    <variation>A</variation>
    <variation>W</variation>
    <variation>Y</variation>
    <location>
        <position position="670"/>
    </location>
</feature>
<feature type="mutagenesis site" description="Slightly reduces catalytic activity." evidence="3">
    <original>S</original>
    <variation>I</variation>
    <variation>V</variation>
    <location>
        <position position="696"/>
    </location>
</feature>
<feature type="mutagenesis site" description="Strongly reduces catalytic activity." evidence="3">
    <original>G</original>
    <variation>S</variation>
    <location>
        <position position="697"/>
    </location>
</feature>
<feature type="mutagenesis site" description="Reduces catalytic activity 2-fold." evidence="3">
    <original>A</original>
    <variation>C</variation>
    <location>
        <position position="701"/>
    </location>
</feature>
<feature type="mutagenesis site" description="Abolishes catalytic activity." evidence="3">
    <original>A</original>
    <variation>L</variation>
    <location>
        <position position="701"/>
    </location>
</feature>
<feature type="mutagenesis site" description="Abolishes catalytic activity." evidence="3">
    <original>G</original>
    <variation>D</variation>
    <variation>N</variation>
    <variation>W</variation>
    <location>
        <position position="735"/>
    </location>
</feature>
<feature type="mutagenesis site" description="Slightly reduces catalytic activity." evidence="3">
    <original>G</original>
    <variation>S</variation>
    <location>
        <position position="735"/>
    </location>
</feature>
<feature type="mutagenesis site" description="Strongly reduces catalytic activity." evidence="3">
    <original>A</original>
    <variation>T</variation>
    <location>
        <position position="743"/>
    </location>
</feature>
<protein>
    <recommendedName>
        <fullName evidence="4">Pseudolaratriene synthase, chloroplastic</fullName>
        <ecNumber evidence="3">4.2.3.180</ecNumber>
    </recommendedName>
    <alternativeName>
        <fullName evidence="4">Terpene synthase 8</fullName>
        <shortName evidence="4">PxaTPS8</shortName>
    </alternativeName>
</protein>
<proteinExistence type="evidence at protein level"/>
<name>TPS8_PSEAD</name>
<dbReference type="EC" id="4.2.3.180" evidence="3"/>
<dbReference type="EMBL" id="KU685114">
    <property type="protein sequence ID" value="APT40486.1"/>
    <property type="molecule type" value="mRNA"/>
</dbReference>
<dbReference type="SMR" id="A0A1L6Z3A0"/>
<dbReference type="KEGG" id="ag:APT40486"/>
<dbReference type="BRENDA" id="4.2.3.180">
    <property type="organism ID" value="15341"/>
</dbReference>
<dbReference type="GO" id="GO:0009507">
    <property type="term" value="C:chloroplast"/>
    <property type="evidence" value="ECO:0007669"/>
    <property type="project" value="UniProtKB-SubCell"/>
</dbReference>
<dbReference type="GO" id="GO:0000287">
    <property type="term" value="F:magnesium ion binding"/>
    <property type="evidence" value="ECO:0007669"/>
    <property type="project" value="InterPro"/>
</dbReference>
<dbReference type="GO" id="GO:0010333">
    <property type="term" value="F:terpene synthase activity"/>
    <property type="evidence" value="ECO:0007669"/>
    <property type="project" value="InterPro"/>
</dbReference>
<dbReference type="GO" id="GO:0016102">
    <property type="term" value="P:diterpenoid biosynthetic process"/>
    <property type="evidence" value="ECO:0007669"/>
    <property type="project" value="InterPro"/>
</dbReference>
<dbReference type="CDD" id="cd00684">
    <property type="entry name" value="Terpene_cyclase_plant_C1"/>
    <property type="match status" value="1"/>
</dbReference>
<dbReference type="FunFam" id="1.50.10.130:FF:000002">
    <property type="entry name" value="Ent-copalyl diphosphate synthase, chloroplastic"/>
    <property type="match status" value="1"/>
</dbReference>
<dbReference type="FunFam" id="1.10.600.10:FF:000005">
    <property type="entry name" value="Ent-kaur-16-ene synthase, chloroplastic"/>
    <property type="match status" value="1"/>
</dbReference>
<dbReference type="Gene3D" id="1.50.10.160">
    <property type="match status" value="1"/>
</dbReference>
<dbReference type="Gene3D" id="1.10.600.10">
    <property type="entry name" value="Farnesyl Diphosphate Synthase"/>
    <property type="match status" value="1"/>
</dbReference>
<dbReference type="Gene3D" id="1.50.10.130">
    <property type="entry name" value="Terpene synthase, N-terminal domain"/>
    <property type="match status" value="1"/>
</dbReference>
<dbReference type="InterPro" id="IPR008949">
    <property type="entry name" value="Isoprenoid_synthase_dom_sf"/>
</dbReference>
<dbReference type="InterPro" id="IPR034741">
    <property type="entry name" value="Terpene_cyclase-like_1_C"/>
</dbReference>
<dbReference type="InterPro" id="IPR044814">
    <property type="entry name" value="Terpene_cyclase_plant_C1"/>
</dbReference>
<dbReference type="InterPro" id="IPR001906">
    <property type="entry name" value="Terpene_synth_N"/>
</dbReference>
<dbReference type="InterPro" id="IPR036965">
    <property type="entry name" value="Terpene_synth_N_sf"/>
</dbReference>
<dbReference type="InterPro" id="IPR050148">
    <property type="entry name" value="Terpene_synthase-like"/>
</dbReference>
<dbReference type="InterPro" id="IPR005630">
    <property type="entry name" value="Terpene_synthase_metal-bd"/>
</dbReference>
<dbReference type="InterPro" id="IPR008930">
    <property type="entry name" value="Terpenoid_cyclase/PrenylTrfase"/>
</dbReference>
<dbReference type="PANTHER" id="PTHR31739:SF25">
    <property type="entry name" value="(E,E)-GERANYLLINALOOL SYNTHASE"/>
    <property type="match status" value="1"/>
</dbReference>
<dbReference type="PANTHER" id="PTHR31739">
    <property type="entry name" value="ENT-COPALYL DIPHOSPHATE SYNTHASE, CHLOROPLASTIC"/>
    <property type="match status" value="1"/>
</dbReference>
<dbReference type="Pfam" id="PF01397">
    <property type="entry name" value="Terpene_synth"/>
    <property type="match status" value="1"/>
</dbReference>
<dbReference type="Pfam" id="PF03936">
    <property type="entry name" value="Terpene_synth_C"/>
    <property type="match status" value="1"/>
</dbReference>
<dbReference type="SFLD" id="SFLDS00005">
    <property type="entry name" value="Isoprenoid_Synthase_Type_I"/>
    <property type="match status" value="1"/>
</dbReference>
<dbReference type="SFLD" id="SFLDG01019">
    <property type="entry name" value="Terpene_Cyclase_Like_1_C_Termi"/>
    <property type="match status" value="1"/>
</dbReference>
<dbReference type="SFLD" id="SFLDG01014">
    <property type="entry name" value="Terpene_Cyclase_Like_1_N-term"/>
    <property type="match status" value="1"/>
</dbReference>
<dbReference type="SUPFAM" id="SSF48239">
    <property type="entry name" value="Terpenoid cyclases/Protein prenyltransferases"/>
    <property type="match status" value="2"/>
</dbReference>
<dbReference type="SUPFAM" id="SSF48576">
    <property type="entry name" value="Terpenoid synthases"/>
    <property type="match status" value="1"/>
</dbReference>